<evidence type="ECO:0000250" key="1">
    <source>
        <dbReference type="UniProtKB" id="P19447"/>
    </source>
</evidence>
<evidence type="ECO:0000250" key="2">
    <source>
        <dbReference type="UniProtKB" id="Q00578"/>
    </source>
</evidence>
<evidence type="ECO:0000255" key="3">
    <source>
        <dbReference type="PROSITE-ProRule" id="PRU00541"/>
    </source>
</evidence>
<evidence type="ECO:0000255" key="4">
    <source>
        <dbReference type="PROSITE-ProRule" id="PRU00542"/>
    </source>
</evidence>
<evidence type="ECO:0000303" key="5">
    <source>
    </source>
</evidence>
<evidence type="ECO:0000305" key="6"/>
<evidence type="ECO:0000305" key="7">
    <source>
    </source>
</evidence>
<proteinExistence type="evidence at protein level"/>
<organism>
    <name type="scientific">Trypanosoma brucei brucei (strain 927/4 GUTat10.1)</name>
    <dbReference type="NCBI Taxonomy" id="185431"/>
    <lineage>
        <taxon>Eukaryota</taxon>
        <taxon>Discoba</taxon>
        <taxon>Euglenozoa</taxon>
        <taxon>Kinetoplastea</taxon>
        <taxon>Metakinetoplastina</taxon>
        <taxon>Trypanosomatida</taxon>
        <taxon>Trypanosomatidae</taxon>
        <taxon>Trypanosoma</taxon>
    </lineage>
</organism>
<gene>
    <name evidence="5" type="primary">XPB</name>
    <name type="ORF">Tb927.3.5100</name>
</gene>
<dbReference type="EC" id="5.6.2.4" evidence="6"/>
<dbReference type="EMBL" id="AC093543">
    <property type="protein sequence ID" value="AAX81019.1"/>
    <property type="molecule type" value="Genomic_DNA"/>
</dbReference>
<dbReference type="EMBL" id="CP000066">
    <property type="protein sequence ID" value="AAZ10541.1"/>
    <property type="molecule type" value="Genomic_DNA"/>
</dbReference>
<dbReference type="RefSeq" id="XP_844100.1">
    <property type="nucleotide sequence ID" value="XM_839007.1"/>
</dbReference>
<dbReference type="SMR" id="Q580W5"/>
<dbReference type="STRING" id="185431.Q580W5"/>
<dbReference type="PaxDb" id="5691-AAZ10541"/>
<dbReference type="GeneID" id="3656453"/>
<dbReference type="KEGG" id="tbr:Tb927.3.5100"/>
<dbReference type="VEuPathDB" id="TriTrypDB:Tb927.3.5100"/>
<dbReference type="eggNOG" id="KOG1123">
    <property type="taxonomic scope" value="Eukaryota"/>
</dbReference>
<dbReference type="InParanoid" id="Q580W5"/>
<dbReference type="OMA" id="IRADCYY"/>
<dbReference type="OrthoDB" id="10262986at2759"/>
<dbReference type="Proteomes" id="UP000008524">
    <property type="component" value="Chromosome 3"/>
</dbReference>
<dbReference type="GO" id="GO:0005737">
    <property type="term" value="C:cytoplasm"/>
    <property type="evidence" value="ECO:0000314"/>
    <property type="project" value="GeneDB"/>
</dbReference>
<dbReference type="GO" id="GO:0005654">
    <property type="term" value="C:nucleoplasm"/>
    <property type="evidence" value="ECO:0000314"/>
    <property type="project" value="GeneDB"/>
</dbReference>
<dbReference type="GO" id="GO:0000112">
    <property type="term" value="C:nucleotide-excision repair factor 3 complex"/>
    <property type="evidence" value="ECO:0000318"/>
    <property type="project" value="GO_Central"/>
</dbReference>
<dbReference type="GO" id="GO:0005634">
    <property type="term" value="C:nucleus"/>
    <property type="evidence" value="ECO:0000314"/>
    <property type="project" value="GeneDB"/>
</dbReference>
<dbReference type="GO" id="GO:0005675">
    <property type="term" value="C:transcription factor TFIIH holo complex"/>
    <property type="evidence" value="ECO:0000318"/>
    <property type="project" value="GO_Central"/>
</dbReference>
<dbReference type="GO" id="GO:0097550">
    <property type="term" value="C:transcription preinitiation complex"/>
    <property type="evidence" value="ECO:0000318"/>
    <property type="project" value="GO_Central"/>
</dbReference>
<dbReference type="GO" id="GO:0043138">
    <property type="term" value="F:3'-5' DNA helicase activity"/>
    <property type="evidence" value="ECO:0000318"/>
    <property type="project" value="GO_Central"/>
</dbReference>
<dbReference type="GO" id="GO:0005524">
    <property type="term" value="F:ATP binding"/>
    <property type="evidence" value="ECO:0007669"/>
    <property type="project" value="UniProtKB-KW"/>
</dbReference>
<dbReference type="GO" id="GO:0016887">
    <property type="term" value="F:ATP hydrolysis activity"/>
    <property type="evidence" value="ECO:0007669"/>
    <property type="project" value="RHEA"/>
</dbReference>
<dbReference type="GO" id="GO:0003677">
    <property type="term" value="F:DNA binding"/>
    <property type="evidence" value="ECO:0007669"/>
    <property type="project" value="InterPro"/>
</dbReference>
<dbReference type="GO" id="GO:0003700">
    <property type="term" value="F:DNA-binding transcription factor activity"/>
    <property type="evidence" value="ECO:0000314"/>
    <property type="project" value="GeneDB"/>
</dbReference>
<dbReference type="GO" id="GO:0006289">
    <property type="term" value="P:nucleotide-excision repair"/>
    <property type="evidence" value="ECO:0007669"/>
    <property type="project" value="InterPro"/>
</dbReference>
<dbReference type="GO" id="GO:0006367">
    <property type="term" value="P:transcription initiation at RNA polymerase II promoter"/>
    <property type="evidence" value="ECO:0000318"/>
    <property type="project" value="GO_Central"/>
</dbReference>
<dbReference type="CDD" id="cd18789">
    <property type="entry name" value="SF2_C_XPB"/>
    <property type="match status" value="1"/>
</dbReference>
<dbReference type="FunFam" id="3.40.50.300:FF:000077">
    <property type="entry name" value="Probable DNA repair helicase RAD25"/>
    <property type="match status" value="1"/>
</dbReference>
<dbReference type="Gene3D" id="3.40.50.300">
    <property type="entry name" value="P-loop containing nucleotide triphosphate hydrolases"/>
    <property type="match status" value="2"/>
</dbReference>
<dbReference type="InterPro" id="IPR050615">
    <property type="entry name" value="ATP-dep_DNA_Helicase"/>
</dbReference>
<dbReference type="InterPro" id="IPR032438">
    <property type="entry name" value="ERCC3_RAD25_C"/>
</dbReference>
<dbReference type="InterPro" id="IPR006935">
    <property type="entry name" value="Helicase/UvrB_N"/>
</dbReference>
<dbReference type="InterPro" id="IPR014001">
    <property type="entry name" value="Helicase_ATP-bd"/>
</dbReference>
<dbReference type="InterPro" id="IPR001650">
    <property type="entry name" value="Helicase_C-like"/>
</dbReference>
<dbReference type="InterPro" id="IPR027417">
    <property type="entry name" value="P-loop_NTPase"/>
</dbReference>
<dbReference type="InterPro" id="IPR001161">
    <property type="entry name" value="XPB/Ssl2"/>
</dbReference>
<dbReference type="NCBIfam" id="TIGR00603">
    <property type="entry name" value="rad25"/>
    <property type="match status" value="1"/>
</dbReference>
<dbReference type="PANTHER" id="PTHR11274">
    <property type="entry name" value="RAD25/XP-B DNA REPAIR HELICASE"/>
    <property type="match status" value="1"/>
</dbReference>
<dbReference type="PANTHER" id="PTHR11274:SF16">
    <property type="entry name" value="TFIIH BASAL TRANSCRIPTION FACTOR COMPLEX HELICASE XPB SUBUNIT"/>
    <property type="match status" value="1"/>
</dbReference>
<dbReference type="Pfam" id="PF16203">
    <property type="entry name" value="ERCC3_RAD25_C"/>
    <property type="match status" value="1"/>
</dbReference>
<dbReference type="Pfam" id="PF04851">
    <property type="entry name" value="ResIII"/>
    <property type="match status" value="1"/>
</dbReference>
<dbReference type="Pfam" id="PF24482">
    <property type="entry name" value="XPB_C"/>
    <property type="match status" value="1"/>
</dbReference>
<dbReference type="PRINTS" id="PR00851">
    <property type="entry name" value="XRODRMPGMNTB"/>
</dbReference>
<dbReference type="SMART" id="SM00487">
    <property type="entry name" value="DEXDc"/>
    <property type="match status" value="1"/>
</dbReference>
<dbReference type="SMART" id="SM00490">
    <property type="entry name" value="HELICc"/>
    <property type="match status" value="1"/>
</dbReference>
<dbReference type="SUPFAM" id="SSF52540">
    <property type="entry name" value="P-loop containing nucleoside triphosphate hydrolases"/>
    <property type="match status" value="1"/>
</dbReference>
<dbReference type="PROSITE" id="PS51192">
    <property type="entry name" value="HELICASE_ATP_BIND_1"/>
    <property type="match status" value="1"/>
</dbReference>
<dbReference type="PROSITE" id="PS51194">
    <property type="entry name" value="HELICASE_CTER"/>
    <property type="match status" value="1"/>
</dbReference>
<protein>
    <recommendedName>
        <fullName>TFIIH basal transcription factor complex helicase/translocase XPB subunit</fullName>
        <ecNumber evidence="6">5.6.2.4</ecNumber>
    </recommendedName>
    <alternativeName>
        <fullName evidence="6">DNA 3'-5' helicase/translocase XPB</fullName>
    </alternativeName>
</protein>
<comment type="function">
    <text evidence="2 7">ATP-dependent 3'-5' DNA helicase/translocase; binds dsDNA rather than ssDNA, unzipping it in a translocase rather than classical helicase activity (By similarity). Component of the general transcription factor IIH (TFIIH) core complex, involved in spliced leader RNA (SL RNA) gene transcription by RNA polymerase II (PubMed:17259543). TFIIH has an essential role in transcription initiation. When the pre-initiation complex (PIC) has been established, TFIIH is required for promoter opening and promoter escape. The ATPase activity of XPB is required for promoter opening and promoter escape (By similarity).</text>
</comment>
<comment type="catalytic activity">
    <reaction evidence="1">
        <text>Couples ATP hydrolysis with the unwinding of duplex DNA by translocating in the 3'-5' direction.</text>
        <dbReference type="EC" id="5.6.2.4"/>
    </reaction>
</comment>
<comment type="catalytic activity">
    <reaction evidence="1">
        <text>ATP + H2O = ADP + phosphate + H(+)</text>
        <dbReference type="Rhea" id="RHEA:13065"/>
        <dbReference type="ChEBI" id="CHEBI:15377"/>
        <dbReference type="ChEBI" id="CHEBI:15378"/>
        <dbReference type="ChEBI" id="CHEBI:30616"/>
        <dbReference type="ChEBI" id="CHEBI:43474"/>
        <dbReference type="ChEBI" id="CHEBI:456216"/>
        <dbReference type="EC" id="5.6.2.4"/>
    </reaction>
</comment>
<comment type="subunit">
    <text evidence="2 7">Component of the 7-subunit TFIIH core complex composed of XPB, XPD, SSL1, TFB1, TFB2, TFB4 and TFB5.</text>
</comment>
<comment type="similarity">
    <text evidence="6">Belongs to the helicase family. RAD25/XPB subfamily.</text>
</comment>
<sequence>MILGPGGRIFINHGHPAYPHLMDFLTACCEPVCRTLYVSEYTISPSSLSAATAEGTYSMEMVRNVIRYFRLDEQQQIPVDVERYAALERRVRDSVQDTSLDLPMEVGEAKVSANGDVKAEEGCEEATDELSPLAGQVKKEETKEVAAEPRRRFLSLSKRISAKSEPLVTRAVVNTGALQPLPADLEQMLREEENSSRVRIVLQPCLRPVKRRAVGGDKQHSDEQQCQRAEETKLAYFLTSPDRNHMEHLVSRLQDFLVPVLLHGTRRWVVSDVDRGVEERSTAESGRAKTLRRLFEAPSSASGRSVASKSLTNEGANGDGLGGGVGRRCTRIVYKSQVMDGKMRNVRERLYKELSVRADLFYDYVQDHSLHVCDLELSENVRLRPYQVASLERFRSGNKAHQGVIVLPCGAGKTLTGIGAAATVKKRTIVMCINVMSVLQWQREFIRWTNLSEDQVTVCIADKKQMPGDVFITTYSMLIARRSNVPEMEQSADAKLTAKILASVGEQPWGLLLLDEVHTALAHNFQEVLNKVKYKCVIGLSATLLREDDKIGDLRHLVGPKLYEANWLDLTRAGFLARVECAEIQCPLPKAFLTEYLESQSDGDPFARRGTTRMAHSVVCLNPYKLWCTQALLEFHRNRSPPDKVIIFCDQIDGIQYYAQHLHVPFMDGKTSDMERENLLQYFQHSDNINAIILSRVGDVALDIPCASVVIQISGLGASRRQEAQRLGRILRPKPASLDNVCSYFYTLVSQDTHEISQSYERQSWLRDQGFSYRVLQSDMVLQHFLRTGGKLCCVGPPRWWYECAGPSCDSAVAAKGTYWIPFSQEAALRMQSRFVAGVRGCDLTATVLRDTPRPPELKNMGVEEKWTVCFSDSCAPETFGTVQLVEGNPLLVRRICCGPLAVEHDCLHGGEECLQYAVQQMKVMVAKNSKNRIPLTT</sequence>
<name>XPB_TRYB2</name>
<accession>Q580W5</accession>
<accession>D6XE64</accession>
<reference key="1">
    <citation type="journal article" date="2005" name="Science">
        <title>The genome of the African trypanosome Trypanosoma brucei.</title>
        <authorList>
            <person name="Berriman M."/>
            <person name="Ghedin E."/>
            <person name="Hertz-Fowler C."/>
            <person name="Blandin G."/>
            <person name="Renauld H."/>
            <person name="Bartholomeu D.C."/>
            <person name="Lennard N.J."/>
            <person name="Caler E."/>
            <person name="Hamlin N.E."/>
            <person name="Haas B."/>
            <person name="Bohme U."/>
            <person name="Hannick L."/>
            <person name="Aslett M.A."/>
            <person name="Shallom J."/>
            <person name="Marcello L."/>
            <person name="Hou L."/>
            <person name="Wickstead B."/>
            <person name="Alsmark U.C.M."/>
            <person name="Arrowsmith C."/>
            <person name="Atkin R.J."/>
            <person name="Barron A.J."/>
            <person name="Bringaud F."/>
            <person name="Brooks K."/>
            <person name="Carrington M."/>
            <person name="Cherevach I."/>
            <person name="Chillingworth T.J."/>
            <person name="Churcher C."/>
            <person name="Clark L.N."/>
            <person name="Corton C.H."/>
            <person name="Cronin A."/>
            <person name="Davies R.M."/>
            <person name="Doggett J."/>
            <person name="Djikeng A."/>
            <person name="Feldblyum T."/>
            <person name="Field M.C."/>
            <person name="Fraser A."/>
            <person name="Goodhead I."/>
            <person name="Hance Z."/>
            <person name="Harper D."/>
            <person name="Harris B.R."/>
            <person name="Hauser H."/>
            <person name="Hostetler J."/>
            <person name="Ivens A."/>
            <person name="Jagels K."/>
            <person name="Johnson D."/>
            <person name="Johnson J."/>
            <person name="Jones K."/>
            <person name="Kerhornou A.X."/>
            <person name="Koo H."/>
            <person name="Larke N."/>
            <person name="Landfear S."/>
            <person name="Larkin C."/>
            <person name="Leech V."/>
            <person name="Line A."/>
            <person name="Lord A."/>
            <person name="Macleod A."/>
            <person name="Mooney P.J."/>
            <person name="Moule S."/>
            <person name="Martin D.M."/>
            <person name="Morgan G.W."/>
            <person name="Mungall K."/>
            <person name="Norbertczak H."/>
            <person name="Ormond D."/>
            <person name="Pai G."/>
            <person name="Peacock C.S."/>
            <person name="Peterson J."/>
            <person name="Quail M.A."/>
            <person name="Rabbinowitsch E."/>
            <person name="Rajandream M.A."/>
            <person name="Reitter C."/>
            <person name="Salzberg S.L."/>
            <person name="Sanders M."/>
            <person name="Schobel S."/>
            <person name="Sharp S."/>
            <person name="Simmonds M."/>
            <person name="Simpson A.J."/>
            <person name="Tallon L."/>
            <person name="Turner C.M."/>
            <person name="Tait A."/>
            <person name="Tivey A.R."/>
            <person name="Van Aken S."/>
            <person name="Walker D."/>
            <person name="Wanless D."/>
            <person name="Wang S."/>
            <person name="White B."/>
            <person name="White O."/>
            <person name="Whitehead S."/>
            <person name="Woodward J."/>
            <person name="Wortman J."/>
            <person name="Adams M.D."/>
            <person name="Embley T.M."/>
            <person name="Gull K."/>
            <person name="Ullu E."/>
            <person name="Barry J.D."/>
            <person name="Fairlamb A.H."/>
            <person name="Opperdoes F."/>
            <person name="Barrell B.G."/>
            <person name="Donelson J.E."/>
            <person name="Hall N."/>
            <person name="Fraser C.M."/>
            <person name="Melville S.E."/>
            <person name="El-Sayed N.M.A."/>
        </authorList>
    </citation>
    <scope>NUCLEOTIDE SEQUENCE [LARGE SCALE GENOMIC DNA]</scope>
    <source>
        <strain>927/4 GUTat10.1</strain>
    </source>
</reference>
<reference key="2">
    <citation type="journal article" date="2007" name="Eukaryot. Cell">
        <title>Spliced leader RNA gene transcription in Trypanosoma brucei requires transcription factor TFIIH.</title>
        <authorList>
            <person name="Lee J.H."/>
            <person name="Nguyen T.N."/>
            <person name="Schimanski B."/>
            <person name="Guenzl A."/>
        </authorList>
    </citation>
    <scope>IDENTIFICATION IN TFIIH COMPLEX</scope>
    <scope>SUBUNIT</scope>
</reference>
<feature type="chain" id="PRO_0000442798" description="TFIIH basal transcription factor complex helicase/translocase XPB subunit">
    <location>
        <begin position="1"/>
        <end position="938"/>
    </location>
</feature>
<feature type="domain" description="Helicase ATP-binding" evidence="3">
    <location>
        <begin position="394"/>
        <end position="562"/>
    </location>
</feature>
<feature type="domain" description="Helicase C-terminal" evidence="4">
    <location>
        <begin position="627"/>
        <end position="781"/>
    </location>
</feature>
<feature type="short sequence motif" description="DEVH box" evidence="3">
    <location>
        <begin position="515"/>
        <end position="518"/>
    </location>
</feature>
<feature type="binding site" evidence="3">
    <location>
        <begin position="407"/>
        <end position="414"/>
    </location>
    <ligand>
        <name>ATP</name>
        <dbReference type="ChEBI" id="CHEBI:30616"/>
    </ligand>
</feature>
<keyword id="KW-0067">ATP-binding</keyword>
<keyword id="KW-0347">Helicase</keyword>
<keyword id="KW-0378">Hydrolase</keyword>
<keyword id="KW-0413">Isomerase</keyword>
<keyword id="KW-0547">Nucleotide-binding</keyword>
<keyword id="KW-1185">Reference proteome</keyword>